<dbReference type="EC" id="3.2.1.1"/>
<dbReference type="EMBL" id="BA000001">
    <property type="protein sequence ID" value="BAA29262.1"/>
    <property type="molecule type" value="Genomic_DNA"/>
</dbReference>
<dbReference type="PIR" id="G71241">
    <property type="entry name" value="G71241"/>
</dbReference>
<dbReference type="RefSeq" id="WP_010884302.1">
    <property type="nucleotide sequence ID" value="NC_000961.1"/>
</dbReference>
<dbReference type="SMR" id="O57932"/>
<dbReference type="STRING" id="70601.gene:9377103"/>
<dbReference type="CAZy" id="GH57">
    <property type="family name" value="Glycoside Hydrolase Family 57"/>
</dbReference>
<dbReference type="EnsemblBacteria" id="BAA29262">
    <property type="protein sequence ID" value="BAA29262"/>
    <property type="gene ID" value="BAA29262"/>
</dbReference>
<dbReference type="GeneID" id="1444084"/>
<dbReference type="KEGG" id="pho:PH0193"/>
<dbReference type="eggNOG" id="arCOG03280">
    <property type="taxonomic scope" value="Archaea"/>
</dbReference>
<dbReference type="OrthoDB" id="18576at2157"/>
<dbReference type="Proteomes" id="UP000000752">
    <property type="component" value="Chromosome"/>
</dbReference>
<dbReference type="GO" id="GO:0004556">
    <property type="term" value="F:alpha-amylase activity"/>
    <property type="evidence" value="ECO:0007669"/>
    <property type="project" value="UniProtKB-EC"/>
</dbReference>
<dbReference type="GO" id="GO:0030246">
    <property type="term" value="F:carbohydrate binding"/>
    <property type="evidence" value="ECO:0007669"/>
    <property type="project" value="InterPro"/>
</dbReference>
<dbReference type="GO" id="GO:0005975">
    <property type="term" value="P:carbohydrate metabolic process"/>
    <property type="evidence" value="ECO:0007669"/>
    <property type="project" value="InterPro"/>
</dbReference>
<dbReference type="CDD" id="cd10793">
    <property type="entry name" value="GH57N_TLGT_like"/>
    <property type="match status" value="1"/>
</dbReference>
<dbReference type="Gene3D" id="2.70.98.10">
    <property type="match status" value="1"/>
</dbReference>
<dbReference type="Gene3D" id="3.20.110.20">
    <property type="match status" value="1"/>
</dbReference>
<dbReference type="InterPro" id="IPR015179">
    <property type="entry name" value="A-amylase/a-glucTrfase_C"/>
</dbReference>
<dbReference type="InterPro" id="IPR015178">
    <property type="entry name" value="A-amylase/a-glucTrfase_central"/>
</dbReference>
<dbReference type="InterPro" id="IPR011013">
    <property type="entry name" value="Gal_mutarotase_sf_dom"/>
</dbReference>
<dbReference type="InterPro" id="IPR014718">
    <property type="entry name" value="GH-type_carb-bd"/>
</dbReference>
<dbReference type="InterPro" id="IPR052046">
    <property type="entry name" value="GH57_Enzymes"/>
</dbReference>
<dbReference type="InterPro" id="IPR011330">
    <property type="entry name" value="Glyco_hydro/deAcase_b/a-brl"/>
</dbReference>
<dbReference type="InterPro" id="IPR028995">
    <property type="entry name" value="Glyco_hydro_57/38_cen_sf"/>
</dbReference>
<dbReference type="InterPro" id="IPR004300">
    <property type="entry name" value="Glyco_hydro_57_N"/>
</dbReference>
<dbReference type="PANTHER" id="PTHR36306:SF1">
    <property type="entry name" value="ALPHA-AMYLASE-RELATED"/>
    <property type="match status" value="1"/>
</dbReference>
<dbReference type="PANTHER" id="PTHR36306">
    <property type="entry name" value="ALPHA-AMYLASE-RELATED-RELATED"/>
    <property type="match status" value="1"/>
</dbReference>
<dbReference type="Pfam" id="PF09094">
    <property type="entry name" value="AmyA-A_glucT_m"/>
    <property type="match status" value="1"/>
</dbReference>
<dbReference type="Pfam" id="PF09095">
    <property type="entry name" value="AmyA-gluTrfs_C"/>
    <property type="match status" value="1"/>
</dbReference>
<dbReference type="Pfam" id="PF03065">
    <property type="entry name" value="Glyco_hydro_57"/>
    <property type="match status" value="1"/>
</dbReference>
<dbReference type="SUPFAM" id="SSF88688">
    <property type="entry name" value="Families 57/38 glycoside transferase middle domain"/>
    <property type="match status" value="1"/>
</dbReference>
<dbReference type="SUPFAM" id="SSF74650">
    <property type="entry name" value="Galactose mutarotase-like"/>
    <property type="match status" value="1"/>
</dbReference>
<dbReference type="SUPFAM" id="SSF88713">
    <property type="entry name" value="Glycoside hydrolase/deacetylase"/>
    <property type="match status" value="1"/>
</dbReference>
<protein>
    <recommendedName>
        <fullName>Alpha-amylase</fullName>
        <ecNumber>3.2.1.1</ecNumber>
    </recommendedName>
</protein>
<proteinExistence type="inferred from homology"/>
<keyword id="KW-0119">Carbohydrate metabolism</keyword>
<keyword id="KW-0326">Glycosidase</keyword>
<keyword id="KW-0378">Hydrolase</keyword>
<accession>O57932</accession>
<name>AMYA_PYRHO</name>
<sequence>MPRINFIFGVHNHQPLGNFEWIIKRAYEKAYRPFLETLEEYPNMKVAVHISGVLVEWLERNRPEYIDLLKSLIKKGQVELVVAGFYEPILVAIPEEDRVEQIKLSKGWARKMGYEARGLWLTERVWEPELVKTLREAGIEYVILDDYHFMSAGLSKEELFWPYYTENGGEAIVVFPIDEKLRYLIPFRPVNETLEYLHSLADEDESKVAVFHDDGEKFGAWPGTHELVYERGWLKEFFDRISSDDKINLMLYSEYLSKFRPKGLVYLPIASYFEMSEWSLPARQAKLFFEFIKKLKELNLFEKYRIFVRGGIWKNFLYKYPEGNYMHKRMLMLSKLLRNNPTARIFVLRAQCNDAYWHGVFGGIYLPHIRRAVWRNLIKAHSYLEPENRVFDLDFDGGEEIMLENENFILVVKPHYGGAIFEMSSKKKYVNYLDVVARRWEHYHSLKDIPEGMKRELSYDKWPRGMLQDHFLLPTEVLDNYMLSKYRELGDFLMSSYHYQIEDKLRLWRSGKVKGISVEVEKVLRLNKDGFTTEYRIVSKEELGLMFGVEINLAVQGTVEYPAEFMSKEIEVKDIFGKVKIESEKEAKIWKFPIKTLSQSESGWDFVQQGVSYTFLYPIEKMLNIKLKFKESM</sequence>
<organism>
    <name type="scientific">Pyrococcus horikoshii (strain ATCC 700860 / DSM 12428 / JCM 9974 / NBRC 100139 / OT-3)</name>
    <dbReference type="NCBI Taxonomy" id="70601"/>
    <lineage>
        <taxon>Archaea</taxon>
        <taxon>Methanobacteriati</taxon>
        <taxon>Methanobacteriota</taxon>
        <taxon>Thermococci</taxon>
        <taxon>Thermococcales</taxon>
        <taxon>Thermococcaceae</taxon>
        <taxon>Pyrococcus</taxon>
    </lineage>
</organism>
<feature type="chain" id="PRO_0000184574" description="Alpha-amylase">
    <location>
        <begin position="1"/>
        <end position="633"/>
    </location>
</feature>
<feature type="active site" description="Nucleophile" evidence="1">
    <location>
        <position position="123"/>
    </location>
</feature>
<feature type="active site" description="Proton donor" evidence="1">
    <location>
        <position position="214"/>
    </location>
</feature>
<gene>
    <name type="primary">amyA</name>
    <name type="ordered locus">PH0193</name>
</gene>
<evidence type="ECO:0000250" key="1"/>
<evidence type="ECO:0000305" key="2"/>
<reference key="1">
    <citation type="journal article" date="1998" name="DNA Res.">
        <title>Complete sequence and gene organization of the genome of a hyper-thermophilic archaebacterium, Pyrococcus horikoshii OT3.</title>
        <authorList>
            <person name="Kawarabayasi Y."/>
            <person name="Sawada M."/>
            <person name="Horikawa H."/>
            <person name="Haikawa Y."/>
            <person name="Hino Y."/>
            <person name="Yamamoto S."/>
            <person name="Sekine M."/>
            <person name="Baba S."/>
            <person name="Kosugi H."/>
            <person name="Hosoyama A."/>
            <person name="Nagai Y."/>
            <person name="Sakai M."/>
            <person name="Ogura K."/>
            <person name="Otsuka R."/>
            <person name="Nakazawa H."/>
            <person name="Takamiya M."/>
            <person name="Ohfuku Y."/>
            <person name="Funahashi T."/>
            <person name="Tanaka T."/>
            <person name="Kudoh Y."/>
            <person name="Yamazaki J."/>
            <person name="Kushida N."/>
            <person name="Oguchi A."/>
            <person name="Aoki K."/>
            <person name="Yoshizawa T."/>
            <person name="Nakamura Y."/>
            <person name="Robb F.T."/>
            <person name="Horikoshi K."/>
            <person name="Masuchi Y."/>
            <person name="Shizuya H."/>
            <person name="Kikuchi H."/>
        </authorList>
    </citation>
    <scope>NUCLEOTIDE SEQUENCE [LARGE SCALE GENOMIC DNA]</scope>
    <source>
        <strain>ATCC 700860 / DSM 12428 / JCM 9974 / NBRC 100139 / OT-3</strain>
    </source>
</reference>
<comment type="catalytic activity">
    <reaction>
        <text>Endohydrolysis of (1-&gt;4)-alpha-D-glucosidic linkages in polysaccharides containing three or more (1-&gt;4)-alpha-linked D-glucose units.</text>
        <dbReference type="EC" id="3.2.1.1"/>
    </reaction>
</comment>
<comment type="similarity">
    <text evidence="2">Belongs to the glycosyl hydrolase 57 family.</text>
</comment>